<evidence type="ECO:0000250" key="1"/>
<evidence type="ECO:0000250" key="2">
    <source>
        <dbReference type="UniProtKB" id="Q9ULV1"/>
    </source>
</evidence>
<evidence type="ECO:0000255" key="3"/>
<evidence type="ECO:0000255" key="4">
    <source>
        <dbReference type="PROSITE-ProRule" id="PRU00090"/>
    </source>
</evidence>
<evidence type="ECO:0000269" key="5">
    <source>
    </source>
</evidence>
<evidence type="ECO:0000269" key="6">
    <source>
    </source>
</evidence>
<evidence type="ECO:0000269" key="7">
    <source>
    </source>
</evidence>
<evidence type="ECO:0000269" key="8">
    <source>
    </source>
</evidence>
<evidence type="ECO:0000269" key="9">
    <source>
    </source>
</evidence>
<evidence type="ECO:0000305" key="10"/>
<feature type="signal peptide" evidence="3">
    <location>
        <begin position="1"/>
        <end position="36"/>
    </location>
</feature>
<feature type="chain" id="PRO_0000012986" description="Frizzled-4">
    <location>
        <begin position="37"/>
        <end position="537"/>
    </location>
</feature>
<feature type="topological domain" description="Extracellular" evidence="2">
    <location>
        <begin position="37"/>
        <end position="212"/>
    </location>
</feature>
<feature type="transmembrane region" description="Helical; Name=1" evidence="2">
    <location>
        <begin position="213"/>
        <end position="243"/>
    </location>
</feature>
<feature type="topological domain" description="Cytoplasmic" evidence="2">
    <location>
        <begin position="244"/>
        <end position="249"/>
    </location>
</feature>
<feature type="transmembrane region" description="Helical; Name=2" evidence="2">
    <location>
        <begin position="250"/>
        <end position="275"/>
    </location>
</feature>
<feature type="topological domain" description="Extracellular" evidence="2">
    <location>
        <begin position="276"/>
        <end position="299"/>
    </location>
</feature>
<feature type="transmembrane region" description="Helical; Name=3" evidence="2">
    <location>
        <begin position="300"/>
        <end position="333"/>
    </location>
</feature>
<feature type="topological domain" description="Cytoplasmic" evidence="2">
    <location>
        <begin position="334"/>
        <end position="336"/>
    </location>
</feature>
<feature type="transmembrane region" description="Helical; Name=4" evidence="2">
    <location>
        <begin position="337"/>
        <end position="365"/>
    </location>
</feature>
<feature type="topological domain" description="Extracellular" evidence="2">
    <location>
        <begin position="366"/>
        <end position="383"/>
    </location>
</feature>
<feature type="transmembrane region" description="Helical; Name=5" evidence="2">
    <location>
        <begin position="384"/>
        <end position="410"/>
    </location>
</feature>
<feature type="topological domain" description="Cytoplasmic" evidence="2">
    <location>
        <begin position="411"/>
        <end position="431"/>
    </location>
</feature>
<feature type="transmembrane region" description="Helical; Name=6" evidence="2">
    <location>
        <begin position="432"/>
        <end position="460"/>
    </location>
</feature>
<feature type="topological domain" description="Extracellular" evidence="2">
    <location>
        <begin position="461"/>
        <end position="473"/>
    </location>
</feature>
<feature type="transmembrane region" description="Helical; Name=7" evidence="2">
    <location>
        <begin position="474"/>
        <end position="495"/>
    </location>
</feature>
<feature type="topological domain" description="Cytoplasmic" evidence="3">
    <location>
        <begin position="496"/>
        <end position="537"/>
    </location>
</feature>
<feature type="domain" description="FZ" evidence="4">
    <location>
        <begin position="40"/>
        <end position="161"/>
    </location>
</feature>
<feature type="short sequence motif" description="Lys-Thr-X-X-X-Trp motif, mediates interaction with the PDZ domain of Dvl family members" evidence="1">
    <location>
        <begin position="499"/>
        <end position="504"/>
    </location>
</feature>
<feature type="short sequence motif" description="PDZ-binding">
    <location>
        <begin position="535"/>
        <end position="537"/>
    </location>
</feature>
<feature type="glycosylation site" description="N-linked (GlcNAc...) asparagine" evidence="3">
    <location>
        <position position="59"/>
    </location>
</feature>
<feature type="glycosylation site" description="N-linked (GlcNAc...) asparagine" evidence="3">
    <location>
        <position position="144"/>
    </location>
</feature>
<feature type="disulfide bond" evidence="4">
    <location>
        <begin position="45"/>
        <end position="106"/>
    </location>
</feature>
<feature type="disulfide bond" evidence="4">
    <location>
        <begin position="53"/>
        <end position="99"/>
    </location>
</feature>
<feature type="disulfide bond" evidence="4">
    <location>
        <begin position="90"/>
        <end position="128"/>
    </location>
</feature>
<feature type="disulfide bond" evidence="4">
    <location>
        <begin position="117"/>
        <end position="158"/>
    </location>
</feature>
<feature type="disulfide bond" evidence="4">
    <location>
        <begin position="121"/>
        <end position="145"/>
    </location>
</feature>
<feature type="disulfide bond" evidence="2">
    <location>
        <begin position="181"/>
        <end position="200"/>
    </location>
</feature>
<feature type="disulfide bond" evidence="2">
    <location>
        <begin position="204"/>
        <end position="282"/>
    </location>
</feature>
<feature type="disulfide bond" evidence="2">
    <location>
        <begin position="302"/>
        <end position="377"/>
    </location>
</feature>
<feature type="sequence conflict" description="In Ref. 2; AAH15256." evidence="10" ref="2">
    <original>F</original>
    <variation>L</variation>
    <location>
        <position position="27"/>
    </location>
</feature>
<proteinExistence type="evidence at protein level"/>
<comment type="function">
    <text evidence="2 5 8">Receptor for Wnt proteins (PubMed:10097073). Most frizzled receptors are coupled to the beta-catenin (CTNNB1) canonical signaling pathway, which leads to the activation of disheveled proteins, inhibition of GSK-3 kinase, nuclear accumulation of beta-catenin (CTNNB1) and activation of Wnt target genes (PubMed:19837033). Plays a critical role in retinal vascularization by acting as a receptor for Wnt proteins and norrin (NDP) (PubMed:19837033). In retina, it can be activated by Wnt protein-binding and also by Wnt-independent signaling via binding of norrin (NDP), promoting in both cases beta-catenin (CTNNB1) accumulation and stimulation of LEF/TCF-mediated transcriptional programs (PubMed:19837033). A second signaling pathway involving PKC and calcium fluxes has been seen for some family members, but it is not yet clear if it represents a distinct pathway or if it can be integrated in the canonical pathway, as PKC seems to be required for Wnt-mediated inactivation of GSK-3 kinase. Both pathways seem to involve interactions with G-proteins. May be involved in transduction and intercellular transmission of polarity information during tissue morphogenesis and/or in differentiated tissues. Activation by Wnt5A stimulates PKC activity via a G-protein-dependent mechanism.</text>
</comment>
<comment type="subunit">
    <text evidence="2 6 7 8 9">Interacts with MAGI3 and NDP (PubMed:15035989, PubMed:15195140). Component of a complex, at least composed of TSPAN12, FZD4 and norrin (NDP) (PubMed:19837033). Interacts (via FZ domain) with TSKU; TSKU competes with WNT2B for binding to FZD4, inhibiting Wnt signaling and repressing peripheral eye development (PubMed:21856951). Interacts with glypican GPC3 (By similarity).</text>
</comment>
<comment type="interaction">
    <interactant intactId="EBI-7987880">
        <id>Q61088</id>
    </interactant>
    <interactant intactId="EBI-3390054">
        <id>P0CG48</id>
        <label>UBC</label>
    </interactant>
    <organismsDiffer>true</organismsDiffer>
    <experiments>3</experiments>
</comment>
<comment type="subcellular location">
    <subcellularLocation>
        <location evidence="5">Cell membrane</location>
        <topology evidence="3">Multi-pass membrane protein</topology>
    </subcellularLocation>
</comment>
<comment type="tissue specificity">
    <text>Expressed in chondrocytes.</text>
</comment>
<comment type="domain">
    <text evidence="1">Lys-Thr-X-X-X-Trp motif interacts with the PDZ domain of Dvl (Disheveled) family members and is involved in the activation of the Wnt/beta-catenin signaling pathway.</text>
</comment>
<comment type="domain">
    <text evidence="1">The FZ domain is involved in binding with Wnt ligands.</text>
</comment>
<comment type="PTM">
    <text evidence="1">Ubiquitinated by ZNRF3, leading to its degradation by the proteasome.</text>
</comment>
<comment type="disruption phenotype">
    <text evidence="6">Defects in retinal vascularization.</text>
</comment>
<comment type="similarity">
    <text evidence="10">Belongs to the G-protein coupled receptor Fz/Smo family.</text>
</comment>
<keyword id="KW-1003">Cell membrane</keyword>
<keyword id="KW-0217">Developmental protein</keyword>
<keyword id="KW-1015">Disulfide bond</keyword>
<keyword id="KW-0297">G-protein coupled receptor</keyword>
<keyword id="KW-0325">Glycoprotein</keyword>
<keyword id="KW-0472">Membrane</keyword>
<keyword id="KW-0675">Receptor</keyword>
<keyword id="KW-1185">Reference proteome</keyword>
<keyword id="KW-0732">Signal</keyword>
<keyword id="KW-0807">Transducer</keyword>
<keyword id="KW-0812">Transmembrane</keyword>
<keyword id="KW-1133">Transmembrane helix</keyword>
<keyword id="KW-0832">Ubl conjugation</keyword>
<keyword id="KW-0879">Wnt signaling pathway</keyword>
<protein>
    <recommendedName>
        <fullName>Frizzled-4</fullName>
        <shortName>Fz-4</shortName>
        <shortName>mFz4</shortName>
    </recommendedName>
    <cdAntigenName>CD344</cdAntigenName>
</protein>
<sequence length="537" mass="60143">MAWPGTGPSSRGAPGGVGLRLGLLLQFLLLLRPTLGFGDEEERRCDPIRIAMCQNLGYNVTKMPNLVGHELQTDAELQLTTFTPLIQYGCSSQLQFFLCSVYVPMCTEKINIPIGPCGGMCLSVKRRCEPVLREFGFAWPDTLNCSKFPPQNDHNHMCMEGPGDEEVPLPHKTPIQPGEECHSVGSNSDQYIWVKRSLNCVLKCGYDAGLYSRSAKEFTDIWMAVWASLCFISTTFTVLTFLIDSSRFSYPERPIIFLSMCYNIYSIAYIVRLTVGRERISCDFEEAAEPVLIQEGLKNTGCAIIFLLMYFFGMASSIWWVILTLTWFLAAGLKWGHEAIEMHSSYFHIAAWAIPAVKTIVILIMRLVDADELTGLCYVGNQNLDALTGFVVAPLFTYLVIGTLFIAAGLVALFKIRSNLQKDGTKTDKLERLMVKIGVFSVLYTVPATCVIACYFYEISNWALFRYSADDSNMAVEMLKIFMSLLVGITSGMWIWSAKTLHTWQKCSNRLVNSGKVKREKRGNGWVKPGKGNETVV</sequence>
<accession>Q61088</accession>
<organism>
    <name type="scientific">Mus musculus</name>
    <name type="common">Mouse</name>
    <dbReference type="NCBI Taxonomy" id="10090"/>
    <lineage>
        <taxon>Eukaryota</taxon>
        <taxon>Metazoa</taxon>
        <taxon>Chordata</taxon>
        <taxon>Craniata</taxon>
        <taxon>Vertebrata</taxon>
        <taxon>Euteleostomi</taxon>
        <taxon>Mammalia</taxon>
        <taxon>Eutheria</taxon>
        <taxon>Euarchontoglires</taxon>
        <taxon>Glires</taxon>
        <taxon>Rodentia</taxon>
        <taxon>Myomorpha</taxon>
        <taxon>Muroidea</taxon>
        <taxon>Muridae</taxon>
        <taxon>Murinae</taxon>
        <taxon>Mus</taxon>
        <taxon>Mus</taxon>
    </lineage>
</organism>
<dbReference type="EMBL" id="U43317">
    <property type="protein sequence ID" value="AAC52430.1"/>
    <property type="molecule type" value="mRNA"/>
</dbReference>
<dbReference type="EMBL" id="BC015256">
    <property type="protein sequence ID" value="AAH15256.1"/>
    <property type="molecule type" value="mRNA"/>
</dbReference>
<dbReference type="CCDS" id="CCDS21441.1"/>
<dbReference type="RefSeq" id="NP_032081.3">
    <property type="nucleotide sequence ID" value="NM_008055.4"/>
</dbReference>
<dbReference type="SMR" id="Q61088"/>
<dbReference type="BioGRID" id="199777">
    <property type="interactions" value="4"/>
</dbReference>
<dbReference type="CORUM" id="Q61088"/>
<dbReference type="DIP" id="DIP-41623N"/>
<dbReference type="FunCoup" id="Q61088">
    <property type="interactions" value="605"/>
</dbReference>
<dbReference type="IntAct" id="Q61088">
    <property type="interactions" value="9"/>
</dbReference>
<dbReference type="MINT" id="Q61088"/>
<dbReference type="STRING" id="10090.ENSMUSP00000049852"/>
<dbReference type="GuidetoPHARMACOLOGY" id="232"/>
<dbReference type="GlyCosmos" id="Q61088">
    <property type="glycosylation" value="2 sites, No reported glycans"/>
</dbReference>
<dbReference type="GlyGen" id="Q61088">
    <property type="glycosylation" value="2 sites, 1 N-linked glycan (1 site)"/>
</dbReference>
<dbReference type="PhosphoSitePlus" id="Q61088"/>
<dbReference type="PaxDb" id="10090-ENSMUSP00000049852"/>
<dbReference type="ProteomicsDB" id="273400"/>
<dbReference type="Antibodypedia" id="17696">
    <property type="antibodies" value="518 antibodies from 39 providers"/>
</dbReference>
<dbReference type="DNASU" id="14366"/>
<dbReference type="Ensembl" id="ENSMUST00000058755.5">
    <property type="protein sequence ID" value="ENSMUSP00000049852.4"/>
    <property type="gene ID" value="ENSMUSG00000049791.5"/>
</dbReference>
<dbReference type="GeneID" id="14366"/>
<dbReference type="KEGG" id="mmu:14366"/>
<dbReference type="UCSC" id="uc009ifx.2">
    <property type="organism name" value="mouse"/>
</dbReference>
<dbReference type="AGR" id="MGI:108520"/>
<dbReference type="CTD" id="8322"/>
<dbReference type="MGI" id="MGI:108520">
    <property type="gene designation" value="Fzd4"/>
</dbReference>
<dbReference type="VEuPathDB" id="HostDB:ENSMUSG00000049791"/>
<dbReference type="eggNOG" id="KOG3577">
    <property type="taxonomic scope" value="Eukaryota"/>
</dbReference>
<dbReference type="GeneTree" id="ENSGT00940000157141"/>
<dbReference type="HOGENOM" id="CLU_007873_2_1_1"/>
<dbReference type="InParanoid" id="Q61088"/>
<dbReference type="OMA" id="HWGEFRA"/>
<dbReference type="OrthoDB" id="5959102at2759"/>
<dbReference type="PhylomeDB" id="Q61088"/>
<dbReference type="TreeFam" id="TF317907"/>
<dbReference type="Reactome" id="R-MMU-4086398">
    <property type="pathway name" value="Ca2+ pathway"/>
</dbReference>
<dbReference type="Reactome" id="R-MMU-4608870">
    <property type="pathway name" value="Asymmetric localization of PCP proteins"/>
</dbReference>
<dbReference type="Reactome" id="R-MMU-4641263">
    <property type="pathway name" value="Regulation of FZD by ubiquitination"/>
</dbReference>
<dbReference type="Reactome" id="R-MMU-5099900">
    <property type="pathway name" value="WNT5A-dependent internalization of FZD4"/>
</dbReference>
<dbReference type="Reactome" id="R-MMU-8856825">
    <property type="pathway name" value="Cargo recognition for clathrin-mediated endocytosis"/>
</dbReference>
<dbReference type="Reactome" id="R-MMU-8856828">
    <property type="pathway name" value="Clathrin-mediated endocytosis"/>
</dbReference>
<dbReference type="BioGRID-ORCS" id="14366">
    <property type="hits" value="6 hits in 77 CRISPR screens"/>
</dbReference>
<dbReference type="ChiTaRS" id="Fzd4">
    <property type="organism name" value="mouse"/>
</dbReference>
<dbReference type="PRO" id="PR:Q61088"/>
<dbReference type="Proteomes" id="UP000000589">
    <property type="component" value="Chromosome 7"/>
</dbReference>
<dbReference type="RNAct" id="Q61088">
    <property type="molecule type" value="protein"/>
</dbReference>
<dbReference type="Bgee" id="ENSMUSG00000049791">
    <property type="expression patterns" value="Expressed in pigmented layer of retina and 263 other cell types or tissues"/>
</dbReference>
<dbReference type="ExpressionAtlas" id="Q61088">
    <property type="expression patterns" value="baseline and differential"/>
</dbReference>
<dbReference type="GO" id="GO:0009986">
    <property type="term" value="C:cell surface"/>
    <property type="evidence" value="ECO:0007669"/>
    <property type="project" value="Ensembl"/>
</dbReference>
<dbReference type="GO" id="GO:0005911">
    <property type="term" value="C:cell-cell junction"/>
    <property type="evidence" value="ECO:0000314"/>
    <property type="project" value="MGI"/>
</dbReference>
<dbReference type="GO" id="GO:0005929">
    <property type="term" value="C:cilium"/>
    <property type="evidence" value="ECO:0007669"/>
    <property type="project" value="Ensembl"/>
</dbReference>
<dbReference type="GO" id="GO:0030425">
    <property type="term" value="C:dendrite"/>
    <property type="evidence" value="ECO:0000315"/>
    <property type="project" value="ARUK-UCL"/>
</dbReference>
<dbReference type="GO" id="GO:0098978">
    <property type="term" value="C:glutamatergic synapse"/>
    <property type="evidence" value="ECO:0000314"/>
    <property type="project" value="SynGO"/>
</dbReference>
<dbReference type="GO" id="GO:0005654">
    <property type="term" value="C:nucleoplasm"/>
    <property type="evidence" value="ECO:0007669"/>
    <property type="project" value="Ensembl"/>
</dbReference>
<dbReference type="GO" id="GO:0005886">
    <property type="term" value="C:plasma membrane"/>
    <property type="evidence" value="ECO:0000314"/>
    <property type="project" value="BHF-UCL"/>
</dbReference>
<dbReference type="GO" id="GO:0045202">
    <property type="term" value="C:synapse"/>
    <property type="evidence" value="ECO:0000314"/>
    <property type="project" value="SynGO"/>
</dbReference>
<dbReference type="GO" id="GO:0001540">
    <property type="term" value="F:amyloid-beta binding"/>
    <property type="evidence" value="ECO:0007669"/>
    <property type="project" value="Ensembl"/>
</dbReference>
<dbReference type="GO" id="GO:0019955">
    <property type="term" value="F:cytokine binding"/>
    <property type="evidence" value="ECO:0000353"/>
    <property type="project" value="BHF-UCL"/>
</dbReference>
<dbReference type="GO" id="GO:0004896">
    <property type="term" value="F:cytokine receptor activity"/>
    <property type="evidence" value="ECO:0007669"/>
    <property type="project" value="Ensembl"/>
</dbReference>
<dbReference type="GO" id="GO:0004930">
    <property type="term" value="F:G protein-coupled receptor activity"/>
    <property type="evidence" value="ECO:0007669"/>
    <property type="project" value="UniProtKB-KW"/>
</dbReference>
<dbReference type="GO" id="GO:0030165">
    <property type="term" value="F:PDZ domain binding"/>
    <property type="evidence" value="ECO:0007669"/>
    <property type="project" value="Ensembl"/>
</dbReference>
<dbReference type="GO" id="GO:0046982">
    <property type="term" value="F:protein heterodimerization activity"/>
    <property type="evidence" value="ECO:0007669"/>
    <property type="project" value="Ensembl"/>
</dbReference>
<dbReference type="GO" id="GO:0042803">
    <property type="term" value="F:protein homodimerization activity"/>
    <property type="evidence" value="ECO:0007669"/>
    <property type="project" value="Ensembl"/>
</dbReference>
<dbReference type="GO" id="GO:0044877">
    <property type="term" value="F:protein-containing complex binding"/>
    <property type="evidence" value="ECO:0007669"/>
    <property type="project" value="Ensembl"/>
</dbReference>
<dbReference type="GO" id="GO:0038023">
    <property type="term" value="F:signaling receptor activity"/>
    <property type="evidence" value="ECO:0000316"/>
    <property type="project" value="ARUK-UCL"/>
</dbReference>
<dbReference type="GO" id="GO:0031625">
    <property type="term" value="F:ubiquitin protein ligase binding"/>
    <property type="evidence" value="ECO:0007669"/>
    <property type="project" value="Ensembl"/>
</dbReference>
<dbReference type="GO" id="GO:0042813">
    <property type="term" value="F:Wnt receptor activity"/>
    <property type="evidence" value="ECO:0000353"/>
    <property type="project" value="MGI"/>
</dbReference>
<dbReference type="GO" id="GO:0017147">
    <property type="term" value="F:Wnt-protein binding"/>
    <property type="evidence" value="ECO:0000353"/>
    <property type="project" value="AgBase"/>
</dbReference>
<dbReference type="GO" id="GO:0001525">
    <property type="term" value="P:angiogenesis"/>
    <property type="evidence" value="ECO:0000315"/>
    <property type="project" value="MGI"/>
</dbReference>
<dbReference type="GO" id="GO:0001568">
    <property type="term" value="P:blood vessel development"/>
    <property type="evidence" value="ECO:0000315"/>
    <property type="project" value="MGI"/>
</dbReference>
<dbReference type="GO" id="GO:0060070">
    <property type="term" value="P:canonical Wnt signaling pathway"/>
    <property type="evidence" value="ECO:0000316"/>
    <property type="project" value="ParkinsonsUK-UCL"/>
</dbReference>
<dbReference type="GO" id="GO:0008283">
    <property type="term" value="P:cell population proliferation"/>
    <property type="evidence" value="ECO:0000315"/>
    <property type="project" value="MGI"/>
</dbReference>
<dbReference type="GO" id="GO:1990830">
    <property type="term" value="P:cellular response to leukemia inhibitory factor"/>
    <property type="evidence" value="ECO:0000270"/>
    <property type="project" value="MGI"/>
</dbReference>
<dbReference type="GO" id="GO:0061301">
    <property type="term" value="P:cerebellum vasculature morphogenesis"/>
    <property type="evidence" value="ECO:0000315"/>
    <property type="project" value="BHF-UCL"/>
</dbReference>
<dbReference type="GO" id="GO:0045446">
    <property type="term" value="P:endothelial cell differentiation"/>
    <property type="evidence" value="ECO:0000315"/>
    <property type="project" value="MGI"/>
</dbReference>
<dbReference type="GO" id="GO:0060856">
    <property type="term" value="P:establishment of blood-brain barrier"/>
    <property type="evidence" value="ECO:0000315"/>
    <property type="project" value="MGI"/>
</dbReference>
<dbReference type="GO" id="GO:0035426">
    <property type="term" value="P:extracellular matrix-cell signaling"/>
    <property type="evidence" value="ECO:0000314"/>
    <property type="project" value="BHF-UCL"/>
</dbReference>
<dbReference type="GO" id="GO:0031987">
    <property type="term" value="P:locomotion involved in locomotory behavior"/>
    <property type="evidence" value="ECO:0000315"/>
    <property type="project" value="MGI"/>
</dbReference>
<dbReference type="GO" id="GO:0001553">
    <property type="term" value="P:luteinization"/>
    <property type="evidence" value="ECO:0000315"/>
    <property type="project" value="MGI"/>
</dbReference>
<dbReference type="GO" id="GO:0010812">
    <property type="term" value="P:negative regulation of cell-substrate adhesion"/>
    <property type="evidence" value="ECO:0000315"/>
    <property type="project" value="BHF-UCL"/>
</dbReference>
<dbReference type="GO" id="GO:0110135">
    <property type="term" value="P:Norrin signaling pathway"/>
    <property type="evidence" value="ECO:0000314"/>
    <property type="project" value="BHF-UCL"/>
</dbReference>
<dbReference type="GO" id="GO:0030335">
    <property type="term" value="P:positive regulation of cell migration"/>
    <property type="evidence" value="ECO:0007669"/>
    <property type="project" value="Ensembl"/>
</dbReference>
<dbReference type="GO" id="GO:0050775">
    <property type="term" value="P:positive regulation of dendrite morphogenesis"/>
    <property type="evidence" value="ECO:0007669"/>
    <property type="project" value="Ensembl"/>
</dbReference>
<dbReference type="GO" id="GO:0150012">
    <property type="term" value="P:positive regulation of neuron projection arborization"/>
    <property type="evidence" value="ECO:0000316"/>
    <property type="project" value="ARUK-UCL"/>
</dbReference>
<dbReference type="GO" id="GO:0045944">
    <property type="term" value="P:positive regulation of transcription by RNA polymerase II"/>
    <property type="evidence" value="ECO:0000314"/>
    <property type="project" value="BHF-UCL"/>
</dbReference>
<dbReference type="GO" id="GO:0042701">
    <property type="term" value="P:progesterone secretion"/>
    <property type="evidence" value="ECO:0000315"/>
    <property type="project" value="MGI"/>
</dbReference>
<dbReference type="GO" id="GO:0030947">
    <property type="term" value="P:regulation of vascular endothelial growth factor receptor signaling pathway"/>
    <property type="evidence" value="ECO:0000315"/>
    <property type="project" value="MGI"/>
</dbReference>
<dbReference type="GO" id="GO:0001666">
    <property type="term" value="P:response to hypoxia"/>
    <property type="evidence" value="ECO:0000315"/>
    <property type="project" value="MGI"/>
</dbReference>
<dbReference type="GO" id="GO:0061298">
    <property type="term" value="P:retina vasculature development in camera-type eye"/>
    <property type="evidence" value="ECO:0000315"/>
    <property type="project" value="MGI"/>
</dbReference>
<dbReference type="GO" id="GO:0061299">
    <property type="term" value="P:retina vasculature morphogenesis in camera-type eye"/>
    <property type="evidence" value="ECO:0000315"/>
    <property type="project" value="MGI"/>
</dbReference>
<dbReference type="GO" id="GO:0061304">
    <property type="term" value="P:retinal blood vessel morphogenesis"/>
    <property type="evidence" value="ECO:0000315"/>
    <property type="project" value="BHF-UCL"/>
</dbReference>
<dbReference type="GO" id="GO:0007605">
    <property type="term" value="P:sensory perception of sound"/>
    <property type="evidence" value="ECO:0000315"/>
    <property type="project" value="MGI"/>
</dbReference>
<dbReference type="GO" id="GO:0034446">
    <property type="term" value="P:substrate adhesion-dependent cell spreading"/>
    <property type="evidence" value="ECO:0000315"/>
    <property type="project" value="MGI"/>
</dbReference>
<dbReference type="GO" id="GO:0001570">
    <property type="term" value="P:vasculogenesis"/>
    <property type="evidence" value="ECO:0000315"/>
    <property type="project" value="MGI"/>
</dbReference>
<dbReference type="GO" id="GO:0016055">
    <property type="term" value="P:Wnt signaling pathway"/>
    <property type="evidence" value="ECO:0000316"/>
    <property type="project" value="ARUK-UCL"/>
</dbReference>
<dbReference type="GO" id="GO:0007223">
    <property type="term" value="P:Wnt signaling pathway, calcium modulating pathway"/>
    <property type="evidence" value="ECO:0007669"/>
    <property type="project" value="Ensembl"/>
</dbReference>
<dbReference type="CDD" id="cd15038">
    <property type="entry name" value="7tmF_FZD4"/>
    <property type="match status" value="1"/>
</dbReference>
<dbReference type="CDD" id="cd07448">
    <property type="entry name" value="CRD_FZ4"/>
    <property type="match status" value="1"/>
</dbReference>
<dbReference type="FunFam" id="1.20.1070.10:FF:000020">
    <property type="entry name" value="Frizzled class receptor 10"/>
    <property type="match status" value="1"/>
</dbReference>
<dbReference type="FunFam" id="1.10.2000.10:FF:000008">
    <property type="entry name" value="Frizzled receptor 4"/>
    <property type="match status" value="1"/>
</dbReference>
<dbReference type="Gene3D" id="1.10.2000.10">
    <property type="entry name" value="Frizzled cysteine-rich domain"/>
    <property type="match status" value="1"/>
</dbReference>
<dbReference type="Gene3D" id="1.20.1070.10">
    <property type="entry name" value="Rhodopsin 7-helix transmembrane proteins"/>
    <property type="match status" value="1"/>
</dbReference>
<dbReference type="InterPro" id="IPR015526">
    <property type="entry name" value="Frizzled/SFRP"/>
</dbReference>
<dbReference type="InterPro" id="IPR000539">
    <property type="entry name" value="Frizzled/Smoothened_7TM"/>
</dbReference>
<dbReference type="InterPro" id="IPR020067">
    <property type="entry name" value="Frizzled_dom"/>
</dbReference>
<dbReference type="InterPro" id="IPR036790">
    <property type="entry name" value="Frizzled_dom_sf"/>
</dbReference>
<dbReference type="InterPro" id="IPR041765">
    <property type="entry name" value="FZ4_CRD"/>
</dbReference>
<dbReference type="InterPro" id="IPR026551">
    <property type="entry name" value="FZD4_7TM"/>
</dbReference>
<dbReference type="InterPro" id="IPR017981">
    <property type="entry name" value="GPCR_2-like_7TM"/>
</dbReference>
<dbReference type="PANTHER" id="PTHR11309">
    <property type="entry name" value="FRIZZLED"/>
    <property type="match status" value="1"/>
</dbReference>
<dbReference type="PANTHER" id="PTHR11309:SF23">
    <property type="entry name" value="FRIZZLED-4"/>
    <property type="match status" value="1"/>
</dbReference>
<dbReference type="Pfam" id="PF01534">
    <property type="entry name" value="Frizzled"/>
    <property type="match status" value="1"/>
</dbReference>
<dbReference type="Pfam" id="PF01392">
    <property type="entry name" value="Fz"/>
    <property type="match status" value="1"/>
</dbReference>
<dbReference type="PRINTS" id="PR00489">
    <property type="entry name" value="FRIZZLED"/>
</dbReference>
<dbReference type="SMART" id="SM00063">
    <property type="entry name" value="FRI"/>
    <property type="match status" value="1"/>
</dbReference>
<dbReference type="SMART" id="SM01330">
    <property type="entry name" value="Frizzled"/>
    <property type="match status" value="1"/>
</dbReference>
<dbReference type="SUPFAM" id="SSF63501">
    <property type="entry name" value="Frizzled cysteine-rich domain"/>
    <property type="match status" value="1"/>
</dbReference>
<dbReference type="PROSITE" id="PS50038">
    <property type="entry name" value="FZ"/>
    <property type="match status" value="1"/>
</dbReference>
<dbReference type="PROSITE" id="PS50261">
    <property type="entry name" value="G_PROTEIN_RECEP_F2_4"/>
    <property type="match status" value="1"/>
</dbReference>
<name>FZD4_MOUSE</name>
<gene>
    <name type="primary">Fzd4</name>
</gene>
<reference key="1">
    <citation type="journal article" date="1996" name="J. Biol. Chem.">
        <title>A large family of putative transmembrane receptors homologous to the product of the Drosophila tissue polarity gene frizzled.</title>
        <authorList>
            <person name="Wang Y."/>
            <person name="Macke J.P."/>
            <person name="Abella B.S."/>
            <person name="Andreasson K."/>
            <person name="Worley P."/>
            <person name="Gilbert D.J."/>
            <person name="Copeland N.G."/>
            <person name="Jenkins N.A."/>
            <person name="Nathans J."/>
        </authorList>
    </citation>
    <scope>NUCLEOTIDE SEQUENCE [MRNA]</scope>
</reference>
<reference key="2">
    <citation type="journal article" date="2004" name="Genome Res.">
        <title>The status, quality, and expansion of the NIH full-length cDNA project: the Mammalian Gene Collection (MGC).</title>
        <authorList>
            <consortium name="The MGC Project Team"/>
        </authorList>
    </citation>
    <scope>NUCLEOTIDE SEQUENCE [LARGE SCALE MRNA]</scope>
    <source>
        <tissue>Kidney</tissue>
    </source>
</reference>
<reference key="3">
    <citation type="journal article" date="1999" name="Curr. Biol.">
        <title>Protein kinase C is differentially stimulated by Wnt and Frizzled homologs in a G-protein-dependent manner.</title>
        <authorList>
            <person name="Sheldahl L.C."/>
            <person name="Park M."/>
            <person name="Malbon C.C."/>
            <person name="Moon R.T."/>
        </authorList>
    </citation>
    <scope>WNT-MEDIATED PKC ACTIVATION</scope>
</reference>
<reference key="4">
    <citation type="journal article" date="1999" name="Proc. Natl. Acad. Sci. U.S.A.">
        <title>Biochemical characterization of Wnt-frizzled interactions using a soluble, biologically active vertebrate Wnt protein.</title>
        <authorList>
            <person name="Hsieh J.C."/>
            <person name="Rattner A."/>
            <person name="Smallwood P.M."/>
            <person name="Nathans J."/>
        </authorList>
    </citation>
    <scope>FUNCTION</scope>
    <scope>SUBCELLULAR LOCATION</scope>
</reference>
<reference key="5">
    <citation type="journal article" date="2004" name="Cell">
        <title>Vascular development in the retina and inner ear: control by Norrin and Frizzled-4, a high-affinity ligand-receptor pair.</title>
        <authorList>
            <person name="Xu Q."/>
            <person name="Wang Y."/>
            <person name="Dabdoub A."/>
            <person name="Smallwood P.M."/>
            <person name="Williams J."/>
            <person name="Woods C."/>
            <person name="Kelley M.W."/>
            <person name="Jiang L."/>
            <person name="Tasman W."/>
            <person name="Zhang K."/>
            <person name="Nathans J."/>
        </authorList>
    </citation>
    <scope>INTERACTION WITH NDP</scope>
    <scope>DISRUPTION PHENOTYPE</scope>
</reference>
<reference key="6">
    <citation type="journal article" date="2004" name="Oncogene">
        <title>MAGI-3 is involved in the regulation of the JNK signaling pathway as a scaffold protein for frizzled and Ltap.</title>
        <authorList>
            <person name="Yao R."/>
            <person name="Natsume Y."/>
            <person name="Noda T."/>
        </authorList>
    </citation>
    <scope>INTERACTION WITH MAGI3</scope>
</reference>
<reference key="7">
    <citation type="journal article" date="2009" name="Cell">
        <title>TSPAN12 regulates retinal vascular development by promoting Norrin-but not Wnt-induced FZD4/beta-catenin signaling.</title>
        <authorList>
            <person name="Junge H.J."/>
            <person name="Yang S."/>
            <person name="Burton J.B."/>
            <person name="Paes K."/>
            <person name="Shu X."/>
            <person name="French D.M."/>
            <person name="Costa M."/>
            <person name="Rice D.S."/>
            <person name="Ye W."/>
        </authorList>
    </citation>
    <scope>FUNCTION</scope>
    <scope>IDENTIFICATION IN A COMPLEX WITH NDP AND TSPAN12</scope>
</reference>
<reference key="8">
    <citation type="journal article" date="2011" name="Proc. Natl. Acad. Sci. U.S.A.">
        <title>Tsukushi functions as a Wnt signaling inhibitor by competing with Wnt2b for binding to transmembrane protein Frizzled4.</title>
        <authorList>
            <person name="Ohta K."/>
            <person name="Ito A."/>
            <person name="Kuriyama S."/>
            <person name="Lupo G."/>
            <person name="Kosaka M."/>
            <person name="Ohnuma S."/>
            <person name="Nakagawa S."/>
            <person name="Tanaka H."/>
        </authorList>
    </citation>
    <scope>INTERACTION WITH TSKU</scope>
</reference>